<feature type="chain" id="PRO_0000148632" description="Argininosuccinate synthase">
    <location>
        <begin position="1"/>
        <end position="395"/>
    </location>
</feature>
<feature type="binding site" evidence="1">
    <location>
        <begin position="6"/>
        <end position="14"/>
    </location>
    <ligand>
        <name>ATP</name>
        <dbReference type="ChEBI" id="CHEBI:30616"/>
    </ligand>
</feature>
<feature type="binding site" evidence="1">
    <location>
        <position position="33"/>
    </location>
    <ligand>
        <name>ATP</name>
        <dbReference type="ChEBI" id="CHEBI:30616"/>
    </ligand>
</feature>
<feature type="binding site" evidence="1">
    <location>
        <position position="84"/>
    </location>
    <ligand>
        <name>L-citrulline</name>
        <dbReference type="ChEBI" id="CHEBI:57743"/>
    </ligand>
</feature>
<feature type="binding site" evidence="1">
    <location>
        <position position="114"/>
    </location>
    <ligand>
        <name>ATP</name>
        <dbReference type="ChEBI" id="CHEBI:30616"/>
    </ligand>
</feature>
<feature type="binding site" evidence="1">
    <location>
        <position position="116"/>
    </location>
    <ligand>
        <name>L-aspartate</name>
        <dbReference type="ChEBI" id="CHEBI:29991"/>
    </ligand>
</feature>
<feature type="binding site" evidence="1">
    <location>
        <position position="120"/>
    </location>
    <ligand>
        <name>L-aspartate</name>
        <dbReference type="ChEBI" id="CHEBI:29991"/>
    </ligand>
</feature>
<feature type="binding site" evidence="1">
    <location>
        <position position="120"/>
    </location>
    <ligand>
        <name>L-citrulline</name>
        <dbReference type="ChEBI" id="CHEBI:57743"/>
    </ligand>
</feature>
<feature type="binding site" evidence="1">
    <location>
        <position position="121"/>
    </location>
    <ligand>
        <name>L-aspartate</name>
        <dbReference type="ChEBI" id="CHEBI:29991"/>
    </ligand>
</feature>
<feature type="binding site" evidence="1">
    <location>
        <position position="124"/>
    </location>
    <ligand>
        <name>L-citrulline</name>
        <dbReference type="ChEBI" id="CHEBI:57743"/>
    </ligand>
</feature>
<feature type="binding site" evidence="1">
    <location>
        <position position="173"/>
    </location>
    <ligand>
        <name>L-citrulline</name>
        <dbReference type="ChEBI" id="CHEBI:57743"/>
    </ligand>
</feature>
<feature type="binding site" evidence="1">
    <location>
        <position position="182"/>
    </location>
    <ligand>
        <name>L-citrulline</name>
        <dbReference type="ChEBI" id="CHEBI:57743"/>
    </ligand>
</feature>
<feature type="binding site" evidence="1">
    <location>
        <position position="258"/>
    </location>
    <ligand>
        <name>L-citrulline</name>
        <dbReference type="ChEBI" id="CHEBI:57743"/>
    </ligand>
</feature>
<feature type="binding site" evidence="1">
    <location>
        <position position="270"/>
    </location>
    <ligand>
        <name>L-citrulline</name>
        <dbReference type="ChEBI" id="CHEBI:57743"/>
    </ligand>
</feature>
<organism>
    <name type="scientific">Rhodococcoides fascians</name>
    <name type="common">Rhodococcus fascians</name>
    <dbReference type="NCBI Taxonomy" id="1828"/>
    <lineage>
        <taxon>Bacteria</taxon>
        <taxon>Bacillati</taxon>
        <taxon>Actinomycetota</taxon>
        <taxon>Actinomycetes</taxon>
        <taxon>Mycobacteriales</taxon>
        <taxon>Nocardiaceae</taxon>
        <taxon>Rhodococcoides</taxon>
    </lineage>
</organism>
<accession>Q93JQ8</accession>
<proteinExistence type="inferred from homology"/>
<keyword id="KW-0028">Amino-acid biosynthesis</keyword>
<keyword id="KW-0055">Arginine biosynthesis</keyword>
<keyword id="KW-0067">ATP-binding</keyword>
<keyword id="KW-0963">Cytoplasm</keyword>
<keyword id="KW-0436">Ligase</keyword>
<keyword id="KW-0547">Nucleotide-binding</keyword>
<name>ASSY_RHOFA</name>
<comment type="catalytic activity">
    <reaction evidence="1">
        <text>L-citrulline + L-aspartate + ATP = 2-(N(omega)-L-arginino)succinate + AMP + diphosphate + H(+)</text>
        <dbReference type="Rhea" id="RHEA:10932"/>
        <dbReference type="ChEBI" id="CHEBI:15378"/>
        <dbReference type="ChEBI" id="CHEBI:29991"/>
        <dbReference type="ChEBI" id="CHEBI:30616"/>
        <dbReference type="ChEBI" id="CHEBI:33019"/>
        <dbReference type="ChEBI" id="CHEBI:57472"/>
        <dbReference type="ChEBI" id="CHEBI:57743"/>
        <dbReference type="ChEBI" id="CHEBI:456215"/>
        <dbReference type="EC" id="6.3.4.5"/>
    </reaction>
</comment>
<comment type="pathway">
    <text evidence="1">Amino-acid biosynthesis; L-arginine biosynthesis; L-arginine from L-ornithine and carbamoyl phosphate: step 2/3.</text>
</comment>
<comment type="subunit">
    <text evidence="1">Homotetramer.</text>
</comment>
<comment type="subcellular location">
    <subcellularLocation>
        <location evidence="1">Cytoplasm</location>
    </subcellularLocation>
</comment>
<comment type="similarity">
    <text evidence="1">Belongs to the argininosuccinate synthase family. Type 1 subfamily.</text>
</comment>
<dbReference type="EC" id="6.3.4.5" evidence="1"/>
<dbReference type="EMBL" id="AJ311775">
    <property type="protein sequence ID" value="CAC43336.1"/>
    <property type="molecule type" value="Genomic_DNA"/>
</dbReference>
<dbReference type="RefSeq" id="WP_015586121.1">
    <property type="nucleotide sequence ID" value="NZ_NPFU01000019.1"/>
</dbReference>
<dbReference type="RefSeq" id="YP_007878694.1">
    <property type="nucleotide sequence ID" value="NC_021080.1"/>
</dbReference>
<dbReference type="SMR" id="Q93JQ8"/>
<dbReference type="STRING" id="1443905.GCA_000761075_00050"/>
<dbReference type="eggNOG" id="COG0137">
    <property type="taxonomic scope" value="Bacteria"/>
</dbReference>
<dbReference type="UniPathway" id="UPA00068">
    <property type="reaction ID" value="UER00113"/>
</dbReference>
<dbReference type="GO" id="GO:0005737">
    <property type="term" value="C:cytoplasm"/>
    <property type="evidence" value="ECO:0007669"/>
    <property type="project" value="UniProtKB-SubCell"/>
</dbReference>
<dbReference type="GO" id="GO:0004055">
    <property type="term" value="F:argininosuccinate synthase activity"/>
    <property type="evidence" value="ECO:0007669"/>
    <property type="project" value="UniProtKB-UniRule"/>
</dbReference>
<dbReference type="GO" id="GO:0005524">
    <property type="term" value="F:ATP binding"/>
    <property type="evidence" value="ECO:0007669"/>
    <property type="project" value="UniProtKB-UniRule"/>
</dbReference>
<dbReference type="GO" id="GO:0000053">
    <property type="term" value="P:argininosuccinate metabolic process"/>
    <property type="evidence" value="ECO:0007669"/>
    <property type="project" value="TreeGrafter"/>
</dbReference>
<dbReference type="GO" id="GO:0006526">
    <property type="term" value="P:L-arginine biosynthetic process"/>
    <property type="evidence" value="ECO:0007669"/>
    <property type="project" value="UniProtKB-UniRule"/>
</dbReference>
<dbReference type="GO" id="GO:0000050">
    <property type="term" value="P:urea cycle"/>
    <property type="evidence" value="ECO:0007669"/>
    <property type="project" value="TreeGrafter"/>
</dbReference>
<dbReference type="CDD" id="cd01999">
    <property type="entry name" value="ASS"/>
    <property type="match status" value="1"/>
</dbReference>
<dbReference type="FunFam" id="3.40.50.620:FF:000019">
    <property type="entry name" value="Argininosuccinate synthase"/>
    <property type="match status" value="1"/>
</dbReference>
<dbReference type="FunFam" id="3.90.1260.10:FF:000007">
    <property type="entry name" value="Argininosuccinate synthase"/>
    <property type="match status" value="1"/>
</dbReference>
<dbReference type="Gene3D" id="3.90.1260.10">
    <property type="entry name" value="Argininosuccinate synthetase, chain A, domain 2"/>
    <property type="match status" value="1"/>
</dbReference>
<dbReference type="Gene3D" id="3.40.50.620">
    <property type="entry name" value="HUPs"/>
    <property type="match status" value="1"/>
</dbReference>
<dbReference type="HAMAP" id="MF_00005">
    <property type="entry name" value="Arg_succ_synth_type1"/>
    <property type="match status" value="1"/>
</dbReference>
<dbReference type="InterPro" id="IPR048268">
    <property type="entry name" value="Arginosuc_syn_C"/>
</dbReference>
<dbReference type="InterPro" id="IPR048267">
    <property type="entry name" value="Arginosuc_syn_N"/>
</dbReference>
<dbReference type="InterPro" id="IPR001518">
    <property type="entry name" value="Arginosuc_synth"/>
</dbReference>
<dbReference type="InterPro" id="IPR018223">
    <property type="entry name" value="Arginosuc_synth_CS"/>
</dbReference>
<dbReference type="InterPro" id="IPR023434">
    <property type="entry name" value="Arginosuc_synth_type_1_subfam"/>
</dbReference>
<dbReference type="InterPro" id="IPR024074">
    <property type="entry name" value="AS_cat/multimer_dom_body"/>
</dbReference>
<dbReference type="InterPro" id="IPR014729">
    <property type="entry name" value="Rossmann-like_a/b/a_fold"/>
</dbReference>
<dbReference type="NCBIfam" id="TIGR00032">
    <property type="entry name" value="argG"/>
    <property type="match status" value="1"/>
</dbReference>
<dbReference type="NCBIfam" id="NF001770">
    <property type="entry name" value="PRK00509.1"/>
    <property type="match status" value="1"/>
</dbReference>
<dbReference type="PANTHER" id="PTHR11587">
    <property type="entry name" value="ARGININOSUCCINATE SYNTHASE"/>
    <property type="match status" value="1"/>
</dbReference>
<dbReference type="PANTHER" id="PTHR11587:SF2">
    <property type="entry name" value="ARGININOSUCCINATE SYNTHASE"/>
    <property type="match status" value="1"/>
</dbReference>
<dbReference type="Pfam" id="PF20979">
    <property type="entry name" value="Arginosuc_syn_C"/>
    <property type="match status" value="1"/>
</dbReference>
<dbReference type="Pfam" id="PF00764">
    <property type="entry name" value="Arginosuc_synth"/>
    <property type="match status" value="1"/>
</dbReference>
<dbReference type="SUPFAM" id="SSF52402">
    <property type="entry name" value="Adenine nucleotide alpha hydrolases-like"/>
    <property type="match status" value="1"/>
</dbReference>
<dbReference type="SUPFAM" id="SSF69864">
    <property type="entry name" value="Argininosuccinate synthetase, C-terminal domain"/>
    <property type="match status" value="1"/>
</dbReference>
<dbReference type="PROSITE" id="PS00564">
    <property type="entry name" value="ARGININOSUCCIN_SYN_1"/>
    <property type="match status" value="1"/>
</dbReference>
<dbReference type="PROSITE" id="PS00565">
    <property type="entry name" value="ARGININOSUCCIN_SYN_2"/>
    <property type="match status" value="1"/>
</dbReference>
<gene>
    <name evidence="1" type="primary">argG</name>
    <name type="synonym">attB</name>
</gene>
<evidence type="ECO:0000255" key="1">
    <source>
        <dbReference type="HAMAP-Rule" id="MF_00005"/>
    </source>
</evidence>
<protein>
    <recommendedName>
        <fullName evidence="1">Argininosuccinate synthase</fullName>
        <ecNumber evidence="1">6.3.4.5</ecNumber>
    </recommendedName>
    <alternativeName>
        <fullName evidence="1">Citrulline--aspartate ligase</fullName>
    </alternativeName>
</protein>
<sequence>MSIVLAYSGGLDTSVAVHWLKERYQTEVIAYCANLGQIEDLEAVSKRATAAGASEVIVEDVRDLFLHDYAIPALAAGAAYEGKYLLAAPLSRPLIAERLVSIARERGASAVAHGATGKGNDQVRFYTSVRALAPELDILAPVIDWEMTSRGSEIAYADRHGIDVGVSKTTPYSIDTNIWGTSIECGDLDLIDHAPPPDAWQITTAPVQAPDRPTTITIEFEAGIPVALDGRKLDLIDLVSELGDTAAANGIGRTEILESRIVGFKSRGIYEAPAATVLLAARTDLEALVLDRETLHHKRSIADQYAELVYYGYWFTDLRAALDAYCARLAHRVTGTVTVELYKGSARCIGRTSPKYGRYSSALADYEEADTFLHEAGAGFAYCWALPLTEGVVTR</sequence>
<reference key="1">
    <citation type="journal article" date="2001" name="Mol. Microbiol.">
        <title>The att locus of Rhodococcus fascians strain D188 is essential for full virulence on tobacco through the production of an autoregulatory compound.</title>
        <authorList>
            <person name="Maes T."/>
            <person name="Vereecke D."/>
            <person name="Ritsema T."/>
            <person name="Cornelis K."/>
            <person name="Thu H.N."/>
            <person name="Van Montagu M."/>
            <person name="Holsters M."/>
            <person name="Goethals K."/>
        </authorList>
    </citation>
    <scope>NUCLEOTIDE SEQUENCE [GENOMIC DNA]</scope>
    <source>
        <strain>D188</strain>
    </source>
</reference>